<gene>
    <name type="primary">nifK</name>
    <name type="ordered locus">MMP0857</name>
</gene>
<name>NIFK_METMP</name>
<comment type="function">
    <text evidence="1">This molybdenum-iron protein is part of the nitrogenase complex that catalyzes the key enzymatic reactions in nitrogen fixation.</text>
</comment>
<comment type="catalytic activity">
    <reaction>
        <text>N2 + 8 reduced [2Fe-2S]-[ferredoxin] + 16 ATP + 16 H2O = H2 + 8 oxidized [2Fe-2S]-[ferredoxin] + 2 NH4(+) + 16 ADP + 16 phosphate + 6 H(+)</text>
        <dbReference type="Rhea" id="RHEA:21448"/>
        <dbReference type="Rhea" id="RHEA-COMP:10000"/>
        <dbReference type="Rhea" id="RHEA-COMP:10001"/>
        <dbReference type="ChEBI" id="CHEBI:15377"/>
        <dbReference type="ChEBI" id="CHEBI:15378"/>
        <dbReference type="ChEBI" id="CHEBI:17997"/>
        <dbReference type="ChEBI" id="CHEBI:18276"/>
        <dbReference type="ChEBI" id="CHEBI:28938"/>
        <dbReference type="ChEBI" id="CHEBI:30616"/>
        <dbReference type="ChEBI" id="CHEBI:33737"/>
        <dbReference type="ChEBI" id="CHEBI:33738"/>
        <dbReference type="ChEBI" id="CHEBI:43474"/>
        <dbReference type="ChEBI" id="CHEBI:456216"/>
        <dbReference type="EC" id="1.18.6.1"/>
    </reaction>
</comment>
<comment type="cofactor">
    <cofactor evidence="1">
        <name>[8Fe-7S] cluster</name>
        <dbReference type="ChEBI" id="CHEBI:21143"/>
    </cofactor>
    <text evidence="1">Binds 1 [8Fe-7S] cluster per heterodimer.</text>
</comment>
<comment type="subunit">
    <text evidence="1">Tetramer of two alpha and two beta chains. Forms complex with the iron protein (nitrogenase component 2) (By similarity).</text>
</comment>
<comment type="similarity">
    <text evidence="2">Belongs to the NifD/NifK/NifE/NifN family.</text>
</comment>
<accession>P0CW53</accession>
<accession>P71527</accession>
<organism>
    <name type="scientific">Methanococcus maripaludis (strain DSM 14266 / JCM 13030 / NBRC 101832 / S2 / LL)</name>
    <dbReference type="NCBI Taxonomy" id="267377"/>
    <lineage>
        <taxon>Archaea</taxon>
        <taxon>Methanobacteriati</taxon>
        <taxon>Methanobacteriota</taxon>
        <taxon>Methanomada group</taxon>
        <taxon>Methanococci</taxon>
        <taxon>Methanococcales</taxon>
        <taxon>Methanococcaceae</taxon>
        <taxon>Methanococcus</taxon>
    </lineage>
</organism>
<feature type="chain" id="PRO_0000408203" description="Nitrogenase molybdenum-iron protein beta chain">
    <location>
        <begin position="1"/>
        <end position="462"/>
    </location>
</feature>
<feature type="binding site" evidence="1">
    <location>
        <position position="21"/>
    </location>
    <ligand>
        <name>[8Fe-7S] cluster</name>
        <dbReference type="ChEBI" id="CHEBI:21143"/>
        <note>ligand shared with alpha chain</note>
    </ligand>
</feature>
<feature type="binding site" evidence="1">
    <location>
        <position position="46"/>
    </location>
    <ligand>
        <name>[8Fe-7S] cluster</name>
        <dbReference type="ChEBI" id="CHEBI:21143"/>
        <note>ligand shared with alpha chain</note>
    </ligand>
</feature>
<feature type="binding site" evidence="1">
    <location>
        <position position="104"/>
    </location>
    <ligand>
        <name>[8Fe-7S] cluster</name>
        <dbReference type="ChEBI" id="CHEBI:21143"/>
        <note>ligand shared with alpha chain</note>
    </ligand>
</feature>
<feature type="binding site" evidence="1">
    <location>
        <position position="145"/>
    </location>
    <ligand>
        <name>[8Fe-7S] cluster</name>
        <dbReference type="ChEBI" id="CHEBI:21143"/>
        <note>ligand shared with alpha chain</note>
    </ligand>
</feature>
<protein>
    <recommendedName>
        <fullName>Nitrogenase molybdenum-iron protein beta chain</fullName>
        <ecNumber>1.18.6.1</ecNumber>
    </recommendedName>
    <alternativeName>
        <fullName>Dinitrogenase</fullName>
    </alternativeName>
    <alternativeName>
        <fullName>Nitrogenase component I</fullName>
    </alternativeName>
</protein>
<keyword id="KW-0067">ATP-binding</keyword>
<keyword id="KW-0408">Iron</keyword>
<keyword id="KW-0411">Iron-sulfur</keyword>
<keyword id="KW-0479">Metal-binding</keyword>
<keyword id="KW-0535">Nitrogen fixation</keyword>
<keyword id="KW-0547">Nucleotide-binding</keyword>
<keyword id="KW-0560">Oxidoreductase</keyword>
<keyword id="KW-1185">Reference proteome</keyword>
<evidence type="ECO:0000250" key="1"/>
<evidence type="ECO:0000305" key="2"/>
<sequence length="462" mass="50503">MSELNVIKKERTAVINPIVTCQPLGAMYAVSGIERGMPLVHGSQGCSTFVRYGFARHFREPADIAVTSLHEDAAVFGGRKNLISGLGNLAARFKPDVMGVVTTCSSEIIGDDVAGFIKTAKVEIAKKMGEEAANKIKIVQINTPSFVEHQFKGYDNAIKAIVDTLAEPKDEENGKLNIIPGIVNPGDIREIKHMLSLMGVEGILLTDTSDPFDSPLRPSKADKNPYYQKGGTPLADLQDCANSLGTISLANYANSAPASLEKKYNMPSKVSEAPIGIQNTDSFIRTVKKFTGNDVTDEILDERGIVIDAMADVASRYLFGRKVAIYGDPSITVGMARFVAELGMIPKVVCTGVKNEYFVNDLKKVAKESDEDIDALFGQDLRALDVYLKENPVDLMIGSSDGRLMAKDLGIPLYRVGYPVYDRVGYQRRPIIGYNGALNLVDGITNTILDKYYETQDWKLQQ</sequence>
<reference key="1">
    <citation type="journal article" date="2004" name="J. Bacteriol.">
        <title>Complete genome sequence of the genetically tractable hydrogenotrophic methanogen Methanococcus maripaludis.</title>
        <authorList>
            <person name="Hendrickson E.L."/>
            <person name="Kaul R."/>
            <person name="Zhou Y."/>
            <person name="Bovee D."/>
            <person name="Chapman P."/>
            <person name="Chung J."/>
            <person name="Conway de Macario E."/>
            <person name="Dodsworth J.A."/>
            <person name="Gillett W."/>
            <person name="Graham D.E."/>
            <person name="Hackett M."/>
            <person name="Haydock A.K."/>
            <person name="Kang A."/>
            <person name="Land M.L."/>
            <person name="Levy R."/>
            <person name="Lie T.J."/>
            <person name="Major T.A."/>
            <person name="Moore B.C."/>
            <person name="Porat I."/>
            <person name="Palmeiri A."/>
            <person name="Rouse G."/>
            <person name="Saenphimmachak C."/>
            <person name="Soell D."/>
            <person name="Van Dien S."/>
            <person name="Wang T."/>
            <person name="Whitman W.B."/>
            <person name="Xia Q."/>
            <person name="Zhang Y."/>
            <person name="Larimer F.W."/>
            <person name="Olson M.V."/>
            <person name="Leigh J.A."/>
        </authorList>
    </citation>
    <scope>NUCLEOTIDE SEQUENCE [LARGE SCALE GENOMIC DNA]</scope>
    <source>
        <strain>DSM 14266 / JCM 13030 / NBRC 101832 / S2 / LL</strain>
    </source>
</reference>
<dbReference type="EC" id="1.18.6.1"/>
<dbReference type="EMBL" id="BX950229">
    <property type="protein sequence ID" value="CAF30413.1"/>
    <property type="molecule type" value="Genomic_DNA"/>
</dbReference>
<dbReference type="RefSeq" id="WP_011170801.1">
    <property type="nucleotide sequence ID" value="NC_005791.1"/>
</dbReference>
<dbReference type="SMR" id="P0CW53"/>
<dbReference type="STRING" id="267377.MMP0857"/>
<dbReference type="EnsemblBacteria" id="CAF30413">
    <property type="protein sequence ID" value="CAF30413"/>
    <property type="gene ID" value="MMP0857"/>
</dbReference>
<dbReference type="GeneID" id="37875414"/>
<dbReference type="KEGG" id="mmp:MMP0857"/>
<dbReference type="PATRIC" id="fig|267377.15.peg.882"/>
<dbReference type="eggNOG" id="arCOG00593">
    <property type="taxonomic scope" value="Archaea"/>
</dbReference>
<dbReference type="HOGENOM" id="CLU_025876_2_0_2"/>
<dbReference type="OrthoDB" id="61861at2157"/>
<dbReference type="Proteomes" id="UP000000590">
    <property type="component" value="Chromosome"/>
</dbReference>
<dbReference type="GO" id="GO:0005524">
    <property type="term" value="F:ATP binding"/>
    <property type="evidence" value="ECO:0007669"/>
    <property type="project" value="UniProtKB-KW"/>
</dbReference>
<dbReference type="GO" id="GO:0051536">
    <property type="term" value="F:iron-sulfur cluster binding"/>
    <property type="evidence" value="ECO:0007669"/>
    <property type="project" value="UniProtKB-KW"/>
</dbReference>
<dbReference type="GO" id="GO:0046872">
    <property type="term" value="F:metal ion binding"/>
    <property type="evidence" value="ECO:0007669"/>
    <property type="project" value="UniProtKB-KW"/>
</dbReference>
<dbReference type="GO" id="GO:0016163">
    <property type="term" value="F:nitrogenase activity"/>
    <property type="evidence" value="ECO:0007669"/>
    <property type="project" value="UniProtKB-EC"/>
</dbReference>
<dbReference type="GO" id="GO:0009399">
    <property type="term" value="P:nitrogen fixation"/>
    <property type="evidence" value="ECO:0007669"/>
    <property type="project" value="UniProtKB-KW"/>
</dbReference>
<dbReference type="CDD" id="cd01965">
    <property type="entry name" value="Nitrogenase_MoFe_beta_like"/>
    <property type="match status" value="1"/>
</dbReference>
<dbReference type="Gene3D" id="3.40.50.1980">
    <property type="entry name" value="Nitrogenase molybdenum iron protein domain"/>
    <property type="match status" value="3"/>
</dbReference>
<dbReference type="Gene3D" id="1.20.89.10">
    <property type="entry name" value="Nitrogenase Molybdenum-iron Protein, subunit B, domain 4"/>
    <property type="match status" value="1"/>
</dbReference>
<dbReference type="InterPro" id="IPR050152">
    <property type="entry name" value="ChlB/BchB/BchZ"/>
</dbReference>
<dbReference type="InterPro" id="IPR000510">
    <property type="entry name" value="Nase/OxRdtase_comp1"/>
</dbReference>
<dbReference type="InterPro" id="IPR000318">
    <property type="entry name" value="Nase_comp1_CS"/>
</dbReference>
<dbReference type="PANTHER" id="PTHR33712">
    <property type="entry name" value="LIGHT-INDEPENDENT PROTOCHLOROPHYLLIDE REDUCTASE SUBUNIT B"/>
    <property type="match status" value="1"/>
</dbReference>
<dbReference type="PANTHER" id="PTHR33712:SF7">
    <property type="entry name" value="LIGHT-INDEPENDENT PROTOCHLOROPHYLLIDE REDUCTASE SUBUNIT B"/>
    <property type="match status" value="1"/>
</dbReference>
<dbReference type="Pfam" id="PF00148">
    <property type="entry name" value="Oxidored_nitro"/>
    <property type="match status" value="1"/>
</dbReference>
<dbReference type="SUPFAM" id="SSF53807">
    <property type="entry name" value="Helical backbone' metal receptor"/>
    <property type="match status" value="1"/>
</dbReference>
<dbReference type="PROSITE" id="PS00699">
    <property type="entry name" value="NITROGENASE_1_1"/>
    <property type="match status" value="1"/>
</dbReference>
<dbReference type="PROSITE" id="PS00090">
    <property type="entry name" value="NITROGENASE_1_2"/>
    <property type="match status" value="1"/>
</dbReference>
<proteinExistence type="inferred from homology"/>